<keyword id="KW-0002">3D-structure</keyword>
<keyword id="KW-0903">Direct protein sequencing</keyword>
<keyword id="KW-1015">Disulfide bond</keyword>
<keyword id="KW-0325">Glycoprotein</keyword>
<keyword id="KW-1267">Proteomics identification</keyword>
<keyword id="KW-0873">Pyrrolidone carboxylic acid</keyword>
<keyword id="KW-1185">Reference proteome</keyword>
<keyword id="KW-0964">Secreted</keyword>
<keyword id="KW-0732">Signal</keyword>
<sequence length="298" mass="34259">MVRMVPVLLSLLLLLGPAVPQENQDGRYSLTYIYTGLSKHVEDVPAFQALGSLNDLQFFRYNSKDRKSQPMGLWRQVEGMEDWKQDSQLQKAREDIFMETLKDIVEYYNDSNGSHVLQGRFGCEIENNRSSGAFWKYYYDGKDYIEFNKEIPAWVPFDPAAQITKQKWEAEPVYVQRAKAYLEEECPATLRKYLKYSKNILDRQDPPSVVVTSHQAPGEKKKLKCLAYDFYPGKIDVHWTRAGEVQEPELRGDVLHNGNGTYQSWVVVAVPPQDTAPYSCHVQHSSLAQPLVVPWEAS</sequence>
<protein>
    <recommendedName>
        <fullName>Zinc-alpha-2-glycoprotein</fullName>
        <shortName>Zn-alpha-2-GP</shortName>
        <shortName>Zn-alpha-2-glycoprotein</shortName>
    </recommendedName>
</protein>
<comment type="function">
    <text>Stimulates lipid degradation in adipocytes and causes the extensive fat losses associated with some advanced cancers. May bind polyunsaturated fatty acids.</text>
</comment>
<comment type="subunit">
    <text evidence="9">Interacts with PIP.</text>
</comment>
<comment type="interaction">
    <interactant intactId="EBI-2513837">
        <id>P25311</id>
    </interactant>
    <interactant intactId="EBI-977302">
        <id>P04156</id>
        <label>PRNP</label>
    </interactant>
    <organismsDiffer>false</organismsDiffer>
    <experiments>4</experiments>
</comment>
<comment type="interaction">
    <interactant intactId="EBI-2513837">
        <id>P25311</id>
    </interactant>
    <interactant intactId="EBI-947187">
        <id>Q9UHD9</id>
        <label>UBQLN2</label>
    </interactant>
    <organismsDiffer>false</organismsDiffer>
    <experiments>3</experiments>
</comment>
<comment type="subcellular location">
    <subcellularLocation>
        <location>Secreted</location>
    </subcellularLocation>
</comment>
<comment type="tissue specificity">
    <text>Blood plasma, seminal plasma, urine, saliva, sweat, epithelial cells of various human glands, liver.</text>
</comment>
<comment type="PTM">
    <text evidence="1 2 3 5 6 7 8 9 10 11 12">N-glycosylated. N-glycan at Asn-128: Hex5HexNAc4.</text>
</comment>
<comment type="similarity">
    <text evidence="14">Belongs to the MHC class I family.</text>
</comment>
<comment type="caution">
    <text evidence="14">It is uncertain whether Met-1 or Met-4 is the initiator.</text>
</comment>
<comment type="sequence caution" evidence="14">
    <conflict type="erroneous initiation">
        <sequence resource="EMBL-CDS" id="AAA61311"/>
    </conflict>
    <text>Extended N-terminus.</text>
</comment>
<comment type="sequence caution" evidence="14">
    <conflict type="erroneous initiation">
        <sequence resource="EMBL-CDS" id="BAA03123"/>
    </conflict>
    <text>Truncated N-terminus.</text>
</comment>
<comment type="sequence caution" evidence="14">
    <conflict type="erroneous initiation">
        <sequence resource="EMBL-CDS" id="BAA14417"/>
    </conflict>
    <text>Truncated N-terminus.</text>
</comment>
<comment type="sequence caution" evidence="14">
    <conflict type="erroneous initiation">
        <sequence resource="EMBL-CDS" id="CAA42438"/>
    </conflict>
    <text>Truncated N-terminus.</text>
</comment>
<name>ZA2G_HUMAN</name>
<reference key="1">
    <citation type="journal article" date="1991" name="FEBS Lett.">
        <title>Human Zn-alpha 2-glycoprotein cDNA cloning and expression analysis in benign and malignant breast tissues.</title>
        <authorList>
            <person name="Freije J.P."/>
            <person name="Fueyo A."/>
            <person name="Uria J."/>
            <person name="Lopez-Otin C."/>
        </authorList>
    </citation>
    <scope>NUCLEOTIDE SEQUENCE [MRNA]</scope>
    <source>
        <tissue>Mammary gland</tissue>
    </source>
</reference>
<reference key="2">
    <citation type="journal article" date="1993" name="Biochemistry">
        <title>Molecular cloning and chromosomal assignment of the gene for human Zn-alpha 2-glycoprotein.</title>
        <authorList>
            <person name="Ueyama H."/>
            <person name="Deng H.X."/>
            <person name="Ohkubo I."/>
        </authorList>
    </citation>
    <scope>NUCLEOTIDE SEQUENCE [GENOMIC DNA]</scope>
</reference>
<reference key="3">
    <citation type="journal article" date="1993" name="Genomics">
        <title>Human Zn-alpha 2-glycoprotein: complete genomic sequence, identification of a related pseudogene and relationship to class I major histocompatibility complex genes.</title>
        <authorList>
            <person name="Freije J.P."/>
            <person name="Fueyo A."/>
            <person name="Uria J.A."/>
            <person name="Velasco G."/>
            <person name="Sanchez L.M."/>
            <person name="Lopez-Boado Y.S."/>
            <person name="Lopez-Otin C."/>
        </authorList>
    </citation>
    <scope>NUCLEOTIDE SEQUENCE [GENOMIC DNA]</scope>
    <source>
        <tissue>Leukocyte</tissue>
    </source>
</reference>
<reference key="4">
    <citation type="journal article" date="2003" name="Nature">
        <title>The DNA sequence of human chromosome 7.</title>
        <authorList>
            <person name="Hillier L.W."/>
            <person name="Fulton R.S."/>
            <person name="Fulton L.A."/>
            <person name="Graves T.A."/>
            <person name="Pepin K.H."/>
            <person name="Wagner-McPherson C."/>
            <person name="Layman D."/>
            <person name="Maas J."/>
            <person name="Jaeger S."/>
            <person name="Walker R."/>
            <person name="Wylie K."/>
            <person name="Sekhon M."/>
            <person name="Becker M.C."/>
            <person name="O'Laughlin M.D."/>
            <person name="Schaller M.E."/>
            <person name="Fewell G.A."/>
            <person name="Delehaunty K.D."/>
            <person name="Miner T.L."/>
            <person name="Nash W.E."/>
            <person name="Cordes M."/>
            <person name="Du H."/>
            <person name="Sun H."/>
            <person name="Edwards J."/>
            <person name="Bradshaw-Cordum H."/>
            <person name="Ali J."/>
            <person name="Andrews S."/>
            <person name="Isak A."/>
            <person name="Vanbrunt A."/>
            <person name="Nguyen C."/>
            <person name="Du F."/>
            <person name="Lamar B."/>
            <person name="Courtney L."/>
            <person name="Kalicki J."/>
            <person name="Ozersky P."/>
            <person name="Bielicki L."/>
            <person name="Scott K."/>
            <person name="Holmes A."/>
            <person name="Harkins R."/>
            <person name="Harris A."/>
            <person name="Strong C.M."/>
            <person name="Hou S."/>
            <person name="Tomlinson C."/>
            <person name="Dauphin-Kohlberg S."/>
            <person name="Kozlowicz-Reilly A."/>
            <person name="Leonard S."/>
            <person name="Rohlfing T."/>
            <person name="Rock S.M."/>
            <person name="Tin-Wollam A.-M."/>
            <person name="Abbott A."/>
            <person name="Minx P."/>
            <person name="Maupin R."/>
            <person name="Strowmatt C."/>
            <person name="Latreille P."/>
            <person name="Miller N."/>
            <person name="Johnson D."/>
            <person name="Murray J."/>
            <person name="Woessner J.P."/>
            <person name="Wendl M.C."/>
            <person name="Yang S.-P."/>
            <person name="Schultz B.R."/>
            <person name="Wallis J.W."/>
            <person name="Spieth J."/>
            <person name="Bieri T.A."/>
            <person name="Nelson J.O."/>
            <person name="Berkowicz N."/>
            <person name="Wohldmann P.E."/>
            <person name="Cook L.L."/>
            <person name="Hickenbotham M.T."/>
            <person name="Eldred J."/>
            <person name="Williams D."/>
            <person name="Bedell J.A."/>
            <person name="Mardis E.R."/>
            <person name="Clifton S.W."/>
            <person name="Chissoe S.L."/>
            <person name="Marra M.A."/>
            <person name="Raymond C."/>
            <person name="Haugen E."/>
            <person name="Gillett W."/>
            <person name="Zhou Y."/>
            <person name="James R."/>
            <person name="Phelps K."/>
            <person name="Iadanoto S."/>
            <person name="Bubb K."/>
            <person name="Simms E."/>
            <person name="Levy R."/>
            <person name="Clendenning J."/>
            <person name="Kaul R."/>
            <person name="Kent W.J."/>
            <person name="Furey T.S."/>
            <person name="Baertsch R.A."/>
            <person name="Brent M.R."/>
            <person name="Keibler E."/>
            <person name="Flicek P."/>
            <person name="Bork P."/>
            <person name="Suyama M."/>
            <person name="Bailey J.A."/>
            <person name="Portnoy M.E."/>
            <person name="Torrents D."/>
            <person name="Chinwalla A.T."/>
            <person name="Gish W.R."/>
            <person name="Eddy S.R."/>
            <person name="McPherson J.D."/>
            <person name="Olson M.V."/>
            <person name="Eichler E.E."/>
            <person name="Green E.D."/>
            <person name="Waterston R.H."/>
            <person name="Wilson R.K."/>
        </authorList>
    </citation>
    <scope>NUCLEOTIDE SEQUENCE [LARGE SCALE GENOMIC DNA]</scope>
</reference>
<reference key="5">
    <citation type="journal article" date="2003" name="Science">
        <title>Human chromosome 7: DNA sequence and biology.</title>
        <authorList>
            <person name="Scherer S.W."/>
            <person name="Cheung J."/>
            <person name="MacDonald J.R."/>
            <person name="Osborne L.R."/>
            <person name="Nakabayashi K."/>
            <person name="Herbrick J.-A."/>
            <person name="Carson A.R."/>
            <person name="Parker-Katiraee L."/>
            <person name="Skaug J."/>
            <person name="Khaja R."/>
            <person name="Zhang J."/>
            <person name="Hudek A.K."/>
            <person name="Li M."/>
            <person name="Haddad M."/>
            <person name="Duggan G.E."/>
            <person name="Fernandez B.A."/>
            <person name="Kanematsu E."/>
            <person name="Gentles S."/>
            <person name="Christopoulos C.C."/>
            <person name="Choufani S."/>
            <person name="Kwasnicka D."/>
            <person name="Zheng X.H."/>
            <person name="Lai Z."/>
            <person name="Nusskern D.R."/>
            <person name="Zhang Q."/>
            <person name="Gu Z."/>
            <person name="Lu F."/>
            <person name="Zeesman S."/>
            <person name="Nowaczyk M.J."/>
            <person name="Teshima I."/>
            <person name="Chitayat D."/>
            <person name="Shuman C."/>
            <person name="Weksberg R."/>
            <person name="Zackai E.H."/>
            <person name="Grebe T.A."/>
            <person name="Cox S.R."/>
            <person name="Kirkpatrick S.J."/>
            <person name="Rahman N."/>
            <person name="Friedman J.M."/>
            <person name="Heng H.H.Q."/>
            <person name="Pelicci P.G."/>
            <person name="Lo-Coco F."/>
            <person name="Belloni E."/>
            <person name="Shaffer L.G."/>
            <person name="Pober B."/>
            <person name="Morton C.C."/>
            <person name="Gusella J.F."/>
            <person name="Bruns G.A.P."/>
            <person name="Korf B.R."/>
            <person name="Quade B.J."/>
            <person name="Ligon A.H."/>
            <person name="Ferguson H."/>
            <person name="Higgins A.W."/>
            <person name="Leach N.T."/>
            <person name="Herrick S.R."/>
            <person name="Lemyre E."/>
            <person name="Farra C.G."/>
            <person name="Kim H.-G."/>
            <person name="Summers A.M."/>
            <person name="Gripp K.W."/>
            <person name="Roberts W."/>
            <person name="Szatmari P."/>
            <person name="Winsor E.J.T."/>
            <person name="Grzeschik K.-H."/>
            <person name="Teebi A."/>
            <person name="Minassian B.A."/>
            <person name="Kere J."/>
            <person name="Armengol L."/>
            <person name="Pujana M.A."/>
            <person name="Estivill X."/>
            <person name="Wilson M.D."/>
            <person name="Koop B.F."/>
            <person name="Tosi S."/>
            <person name="Moore G.E."/>
            <person name="Boright A.P."/>
            <person name="Zlotorynski E."/>
            <person name="Kerem B."/>
            <person name="Kroisel P.M."/>
            <person name="Petek E."/>
            <person name="Oscier D.G."/>
            <person name="Mould S.J."/>
            <person name="Doehner H."/>
            <person name="Doehner K."/>
            <person name="Rommens J.M."/>
            <person name="Vincent J.B."/>
            <person name="Venter J.C."/>
            <person name="Li P.W."/>
            <person name="Mural R.J."/>
            <person name="Adams M.D."/>
            <person name="Tsui L.-C."/>
        </authorList>
    </citation>
    <scope>NUCLEOTIDE SEQUENCE [LARGE SCALE GENOMIC DNA]</scope>
</reference>
<reference key="6">
    <citation type="submission" date="2005-09" db="EMBL/GenBank/DDBJ databases">
        <authorList>
            <person name="Mural R.J."/>
            <person name="Istrail S."/>
            <person name="Sutton G.G."/>
            <person name="Florea L."/>
            <person name="Halpern A.L."/>
            <person name="Mobarry C.M."/>
            <person name="Lippert R."/>
            <person name="Walenz B."/>
            <person name="Shatkay H."/>
            <person name="Dew I."/>
            <person name="Miller J.R."/>
            <person name="Flanigan M.J."/>
            <person name="Edwards N.J."/>
            <person name="Bolanos R."/>
            <person name="Fasulo D."/>
            <person name="Halldorsson B.V."/>
            <person name="Hannenhalli S."/>
            <person name="Turner R."/>
            <person name="Yooseph S."/>
            <person name="Lu F."/>
            <person name="Nusskern D.R."/>
            <person name="Shue B.C."/>
            <person name="Zheng X.H."/>
            <person name="Zhong F."/>
            <person name="Delcher A.L."/>
            <person name="Huson D.H."/>
            <person name="Kravitz S.A."/>
            <person name="Mouchard L."/>
            <person name="Reinert K."/>
            <person name="Remington K.A."/>
            <person name="Clark A.G."/>
            <person name="Waterman M.S."/>
            <person name="Eichler E.E."/>
            <person name="Adams M.D."/>
            <person name="Hunkapiller M.W."/>
            <person name="Myers E.W."/>
            <person name="Venter J.C."/>
        </authorList>
    </citation>
    <scope>NUCLEOTIDE SEQUENCE [LARGE SCALE GENOMIC DNA]</scope>
</reference>
<reference key="7">
    <citation type="journal article" date="2004" name="Genome Res.">
        <title>The status, quality, and expansion of the NIH full-length cDNA project: the Mammalian Gene Collection (MGC).</title>
        <authorList>
            <consortium name="The MGC Project Team"/>
        </authorList>
    </citation>
    <scope>NUCLEOTIDE SEQUENCE [LARGE SCALE MRNA]</scope>
    <source>
        <tissue>Colon</tissue>
        <tissue>Prostate</tissue>
    </source>
</reference>
<reference key="8">
    <citation type="journal article" date="1991" name="Biochem. Biophys. Res. Commun.">
        <title>Cloning and nucleotide sequence of a human Zn-alpha 2-glycoprotein cDNA and chromosomal assignment of its gene.</title>
        <authorList>
            <person name="Ueyama H."/>
            <person name="Niwa M."/>
            <person name="Tada T."/>
            <person name="Sasaki M."/>
            <person name="Ohkubo I."/>
        </authorList>
    </citation>
    <scope>NUCLEOTIDE SEQUENCE [MRNA] OF 2-298</scope>
    <source>
        <tissue>Liver</tissue>
        <tissue>Prostate</tissue>
    </source>
</reference>
<reference key="9">
    <citation type="journal article" date="1988" name="Proc. Natl. Acad. Sci. U.S.A.">
        <title>Complete amino acid sequence of human plasma Zn-alpha 2-glycoprotein and its homology to histocompatibility antigens.</title>
        <authorList>
            <person name="Araki T."/>
            <person name="Gejyo F."/>
            <person name="Takagaki K."/>
            <person name="Haupt H."/>
            <person name="Schwick H.G."/>
            <person name="Buergi W."/>
            <person name="Marti T."/>
            <person name="Schaller J."/>
            <person name="Rickli E."/>
            <person name="Brossmer R."/>
            <person name="Atkinson P.H."/>
            <person name="Putnam F.W."/>
            <person name="Schmid K."/>
        </authorList>
    </citation>
    <scope>PROTEIN SEQUENCE OF 21-298</scope>
    <scope>PYROGLUTAMATE FORMATION AT GLN-21</scope>
    <source>
        <tissue>Plasma</tissue>
    </source>
</reference>
<reference key="10">
    <citation type="journal article" date="2004" name="Protein Sci.">
        <title>Signal peptide prediction based on analysis of experimentally verified cleavage sites.</title>
        <authorList>
            <person name="Zhang Z."/>
            <person name="Henzel W.J."/>
        </authorList>
    </citation>
    <scope>PROTEIN SEQUENCE OF 21-35</scope>
</reference>
<reference key="11">
    <citation type="journal article" date="1997" name="Proc. Natl. Acad. Sci. U.S.A.">
        <title>Biochemical characterization and crystallization of human Zn-alpha2-glycoprotein, a soluble class I major histocompatibility complex homolog.</title>
        <authorList>
            <person name="Sanchez L.M."/>
            <person name="Lopez-Otin C."/>
            <person name="Bjorkman P.J."/>
        </authorList>
    </citation>
    <scope>CHARACTERIZATION</scope>
    <scope>CRYSTALLIZATION</scope>
</reference>
<reference key="12">
    <citation type="journal article" date="2001" name="J. Biol. Chem.">
        <title>Hydrophobic ligand binding by Zn-alpha 2-glycoprotein, a soluble fat-depleting factor related to major histocompatibility complex proteins.</title>
        <authorList>
            <person name="Kennedy M.W."/>
            <person name="Heikema A.P."/>
            <person name="Cooper A."/>
            <person name="Bjorkman P.J."/>
            <person name="Sanchez L.M."/>
        </authorList>
    </citation>
    <scope>IN VITRO BINDING OF FATTY ACID</scope>
</reference>
<reference key="13">
    <citation type="journal article" date="2004" name="Mol. Cell. Proteomics">
        <title>A proteomic analysis of human bile.</title>
        <authorList>
            <person name="Kristiansen T.Z."/>
            <person name="Bunkenborg J."/>
            <person name="Gronborg M."/>
            <person name="Molina H."/>
            <person name="Thuluvath P.J."/>
            <person name="Argani P."/>
            <person name="Goggins M.G."/>
            <person name="Maitra A."/>
            <person name="Pandey A."/>
        </authorList>
    </citation>
    <scope>GLYCOSYLATION [LARGE SCALE ANALYSIS] AT ASN-128</scope>
    <source>
        <tissue>Bile</tissue>
    </source>
</reference>
<reference key="14">
    <citation type="journal article" date="2004" name="Proteomics">
        <title>Screening for N-glycosylated proteins by liquid chromatography mass spectrometry.</title>
        <authorList>
            <person name="Bunkenborg J."/>
            <person name="Pilch B.J."/>
            <person name="Podtelejnikov A.V."/>
            <person name="Wisniewski J.R."/>
        </authorList>
    </citation>
    <scope>GLYCOSYLATION [LARGE SCALE ANALYSIS] AT ASN-112 AND ASN-128</scope>
    <source>
        <tissue>Plasma</tissue>
    </source>
</reference>
<reference key="15">
    <citation type="journal article" date="2005" name="J. Proteome Res.">
        <title>Human plasma N-glycoproteome analysis by immunoaffinity subtraction, hydrazide chemistry, and mass spectrometry.</title>
        <authorList>
            <person name="Liu T."/>
            <person name="Qian W.-J."/>
            <person name="Gritsenko M.A."/>
            <person name="Camp D.G. II"/>
            <person name="Monroe M.E."/>
            <person name="Moore R.J."/>
            <person name="Smith R.D."/>
        </authorList>
    </citation>
    <scope>GLYCOSYLATION [LARGE SCALE ANALYSIS] AT ASN-112</scope>
    <source>
        <tissue>Plasma</tissue>
    </source>
</reference>
<reference key="16">
    <citation type="journal article" date="2006" name="J. Proteome Res.">
        <title>Identification of N-linked glycoproteins in human saliva by glycoprotein capture and mass spectrometry.</title>
        <authorList>
            <person name="Ramachandran P."/>
            <person name="Boontheung P."/>
            <person name="Xie Y."/>
            <person name="Sondej M."/>
            <person name="Wong D.T."/>
            <person name="Loo J.A."/>
        </authorList>
    </citation>
    <scope>GLYCOSYLATION [LARGE SCALE ANALYSIS] AT ASN-109; ASN-112 AND ASN-128</scope>
    <source>
        <tissue>Saliva</tissue>
    </source>
</reference>
<reference key="17">
    <citation type="journal article" date="2008" name="Proteomics">
        <title>Identification of N-linked glycoproteins in human milk by hydrophilic interaction liquid chromatography and mass spectrometry.</title>
        <authorList>
            <person name="Picariello G."/>
            <person name="Ferranti P."/>
            <person name="Mamone G."/>
            <person name="Roepstorff P."/>
            <person name="Addeo F."/>
        </authorList>
    </citation>
    <scope>GLYCOSYLATION [LARGE SCALE ANALYSIS] AT ASN-109; ASN-112 AND ASN-128</scope>
    <source>
        <tissue>Milk</tissue>
    </source>
</reference>
<reference key="18">
    <citation type="journal article" date="2009" name="J. Proteome Res.">
        <title>Glycoproteomics analysis of human liver tissue by combination of multiple enzyme digestion and hydrazide chemistry.</title>
        <authorList>
            <person name="Chen R."/>
            <person name="Jiang X."/>
            <person name="Sun D."/>
            <person name="Han G."/>
            <person name="Wang F."/>
            <person name="Ye M."/>
            <person name="Wang L."/>
            <person name="Zou H."/>
        </authorList>
    </citation>
    <scope>GLYCOSYLATION [LARGE SCALE ANALYSIS] AT ASN-109; ASN-112 AND ASN-128</scope>
    <source>
        <tissue>Liver</tissue>
    </source>
</reference>
<reference key="19">
    <citation type="journal article" date="2009" name="Mol. Cell. Proteomics">
        <title>A strategy for precise and large scale identification of core fucosylated glycoproteins.</title>
        <authorList>
            <person name="Jia W."/>
            <person name="Lu Z."/>
            <person name="Fu Y."/>
            <person name="Wang H.P."/>
            <person name="Wang L.H."/>
            <person name="Chi H."/>
            <person name="Yuan Z.F."/>
            <person name="Zheng Z.B."/>
            <person name="Song L.N."/>
            <person name="Han H.H."/>
            <person name="Liang Y.M."/>
            <person name="Wang J.L."/>
            <person name="Cai Y."/>
            <person name="Zhang Y.K."/>
            <person name="Deng Y.L."/>
            <person name="Ying W.T."/>
            <person name="He S.M."/>
            <person name="Qian X.H."/>
        </authorList>
    </citation>
    <scope>GLYCOSYLATION AT ASN-109 AND ASN-128</scope>
</reference>
<reference key="20">
    <citation type="journal article" date="2012" name="Mol. Cell. Proteomics">
        <title>Human urinary glycoproteomics; attachment site specific analysis of N- and O-linked glycosylations by CID and ECD.</title>
        <authorList>
            <person name="Halim A."/>
            <person name="Nilsson J."/>
            <person name="Ruetschi U."/>
            <person name="Hesse C."/>
            <person name="Larson G."/>
        </authorList>
    </citation>
    <scope>GLYCOSYLATION AT ASN-128</scope>
    <scope>STRUCTURE OF CARBOHYDRATES</scope>
    <scope>IDENTIFICATION BY MASS SPECTROMETRY</scope>
</reference>
<reference key="21">
    <citation type="journal article" date="2014" name="J. Proteomics">
        <title>An enzyme assisted RP-RPLC approach for in-depth analysis of human liver phosphoproteome.</title>
        <authorList>
            <person name="Bian Y."/>
            <person name="Song C."/>
            <person name="Cheng K."/>
            <person name="Dong M."/>
            <person name="Wang F."/>
            <person name="Huang J."/>
            <person name="Sun D."/>
            <person name="Wang L."/>
            <person name="Ye M."/>
            <person name="Zou H."/>
        </authorList>
    </citation>
    <scope>IDENTIFICATION BY MASS SPECTROMETRY [LARGE SCALE ANALYSIS]</scope>
    <source>
        <tissue>Liver</tissue>
    </source>
</reference>
<reference key="22">
    <citation type="journal article" date="1999" name="Science">
        <title>Crystal structure of human ZAG, a fat-depleting factor related to MHC molecules.</title>
        <authorList>
            <person name="Sanchez L.M."/>
            <person name="Chirino A.J."/>
            <person name="Bjorkman P.J."/>
        </authorList>
    </citation>
    <scope>X-RAY CRYSTALLOGRAPHY (2.8 ANGSTROMS)</scope>
    <scope>DISULFIDE BONDS</scope>
    <scope>GLYCOSYLATION AT ASN-109; ASN-128 AND ASN-259</scope>
</reference>
<reference key="23">
    <citation type="journal article" date="2004" name="J. Struct. Biol.">
        <title>Crystallographic studies of ligand binding by Zn-alpha2-glycoprotein.</title>
        <authorList>
            <person name="Delker S.L."/>
            <person name="West A.P. Jr."/>
            <person name="McDermott L."/>
            <person name="Kennedy M.W."/>
            <person name="Bjorkman P.J."/>
        </authorList>
    </citation>
    <scope>X-RAY CRYSTALLOGRAPHY (1.95 ANGSTROMS) OF 21-298</scope>
    <scope>DISULFIDE BONDS</scope>
    <scope>GLYCOSYLATION AT ASN-128 AND ASN-259</scope>
</reference>
<reference key="24">
    <citation type="journal article" date="2008" name="J. Mol. Biol.">
        <title>Crystal structure of the novel complex formed between zinc alpha2-glycoprotein (ZAG) and prolactin-inducible protein (PIP) from human seminal plasma.</title>
        <authorList>
            <person name="Hassan M.I."/>
            <person name="Bilgrami S."/>
            <person name="Kumar V."/>
            <person name="Singh N."/>
            <person name="Yadav S."/>
            <person name="Kaur P."/>
            <person name="Singh T.P."/>
        </authorList>
    </citation>
    <scope>X-RAY CRYSTALLOGRAPHY (3.2 ANGSTROMS) OF 32-149 IN COMPLEX WITH PIP</scope>
    <scope>DISULFIDE BONDS</scope>
    <scope>GLYCOSYLATION AT ASN-259</scope>
</reference>
<organism>
    <name type="scientific">Homo sapiens</name>
    <name type="common">Human</name>
    <dbReference type="NCBI Taxonomy" id="9606"/>
    <lineage>
        <taxon>Eukaryota</taxon>
        <taxon>Metazoa</taxon>
        <taxon>Chordata</taxon>
        <taxon>Craniata</taxon>
        <taxon>Vertebrata</taxon>
        <taxon>Euteleostomi</taxon>
        <taxon>Mammalia</taxon>
        <taxon>Eutheria</taxon>
        <taxon>Euarchontoglires</taxon>
        <taxon>Primates</taxon>
        <taxon>Haplorrhini</taxon>
        <taxon>Catarrhini</taxon>
        <taxon>Hominidae</taxon>
        <taxon>Homo</taxon>
    </lineage>
</organism>
<dbReference type="EMBL" id="X59766">
    <property type="protein sequence ID" value="CAA42438.1"/>
    <property type="status" value="ALT_INIT"/>
    <property type="molecule type" value="mRNA"/>
</dbReference>
<dbReference type="EMBL" id="D14034">
    <property type="protein sequence ID" value="BAA03123.1"/>
    <property type="status" value="ALT_INIT"/>
    <property type="molecule type" value="Genomic_DNA"/>
</dbReference>
<dbReference type="EMBL" id="X69953">
    <property type="protein sequence ID" value="CAA49574.1"/>
    <property type="molecule type" value="Genomic_DNA"/>
</dbReference>
<dbReference type="EMBL" id="AC004522">
    <property type="status" value="NOT_ANNOTATED_CDS"/>
    <property type="molecule type" value="Genomic_DNA"/>
</dbReference>
<dbReference type="EMBL" id="CH236956">
    <property type="protein sequence ID" value="EAL23862.1"/>
    <property type="molecule type" value="Genomic_DNA"/>
</dbReference>
<dbReference type="EMBL" id="CH471091">
    <property type="protein sequence ID" value="EAW76621.1"/>
    <property type="molecule type" value="Genomic_DNA"/>
</dbReference>
<dbReference type="EMBL" id="CH471091">
    <property type="protein sequence ID" value="EAW76622.1"/>
    <property type="molecule type" value="Genomic_DNA"/>
</dbReference>
<dbReference type="EMBL" id="BC005306">
    <property type="protein sequence ID" value="AAH05306.1"/>
    <property type="molecule type" value="mRNA"/>
</dbReference>
<dbReference type="EMBL" id="BC033830">
    <property type="protein sequence ID" value="AAH33830.1"/>
    <property type="molecule type" value="mRNA"/>
</dbReference>
<dbReference type="EMBL" id="D90427">
    <property type="protein sequence ID" value="BAA14417.1"/>
    <property type="status" value="ALT_INIT"/>
    <property type="molecule type" value="mRNA"/>
</dbReference>
<dbReference type="EMBL" id="M76707">
    <property type="protein sequence ID" value="AAA61311.1"/>
    <property type="status" value="ALT_INIT"/>
    <property type="molecule type" value="mRNA"/>
</dbReference>
<dbReference type="CCDS" id="CCDS5680.1"/>
<dbReference type="PIR" id="A54175">
    <property type="entry name" value="A54175"/>
</dbReference>
<dbReference type="RefSeq" id="NP_001176.1">
    <property type="nucleotide sequence ID" value="NM_001185.4"/>
</dbReference>
<dbReference type="RefSeq" id="XP_054214632.1">
    <property type="nucleotide sequence ID" value="XM_054358657.1"/>
</dbReference>
<dbReference type="RefSeq" id="XP_054214633.1">
    <property type="nucleotide sequence ID" value="XM_054358658.1"/>
</dbReference>
<dbReference type="PDB" id="1T7V">
    <property type="method" value="X-ray"/>
    <property type="resolution" value="1.95 A"/>
    <property type="chains" value="A=21-298"/>
</dbReference>
<dbReference type="PDB" id="1T7W">
    <property type="method" value="X-ray"/>
    <property type="resolution" value="2.70 A"/>
    <property type="chains" value="A=21-298"/>
</dbReference>
<dbReference type="PDB" id="1T7X">
    <property type="method" value="X-ray"/>
    <property type="resolution" value="3.10 A"/>
    <property type="chains" value="A=21-298"/>
</dbReference>
<dbReference type="PDB" id="1T7Y">
    <property type="method" value="X-ray"/>
    <property type="resolution" value="2.80 A"/>
    <property type="chains" value="A=21-298"/>
</dbReference>
<dbReference type="PDB" id="1T7Z">
    <property type="method" value="X-ray"/>
    <property type="resolution" value="3.00 A"/>
    <property type="chains" value="A=21-298"/>
</dbReference>
<dbReference type="PDB" id="1T80">
    <property type="method" value="X-ray"/>
    <property type="resolution" value="2.10 A"/>
    <property type="chains" value="A=21-298"/>
</dbReference>
<dbReference type="PDB" id="1ZAG">
    <property type="method" value="X-ray"/>
    <property type="resolution" value="2.80 A"/>
    <property type="chains" value="A/B/C/D=25-298"/>
</dbReference>
<dbReference type="PDB" id="3ES6">
    <property type="method" value="X-ray"/>
    <property type="resolution" value="3.23 A"/>
    <property type="chains" value="A=21-298"/>
</dbReference>
<dbReference type="PDB" id="6R2U">
    <property type="method" value="X-ray"/>
    <property type="resolution" value="2.49 A"/>
    <property type="chains" value="A/B/C/D/E/F=21-298"/>
</dbReference>
<dbReference type="PDBsum" id="1T7V"/>
<dbReference type="PDBsum" id="1T7W"/>
<dbReference type="PDBsum" id="1T7X"/>
<dbReference type="PDBsum" id="1T7Y"/>
<dbReference type="PDBsum" id="1T7Z"/>
<dbReference type="PDBsum" id="1T80"/>
<dbReference type="PDBsum" id="1ZAG"/>
<dbReference type="PDBsum" id="3ES6"/>
<dbReference type="PDBsum" id="6R2U"/>
<dbReference type="SMR" id="P25311"/>
<dbReference type="BioGRID" id="107040">
    <property type="interactions" value="173"/>
</dbReference>
<dbReference type="CORUM" id="P25311"/>
<dbReference type="FunCoup" id="P25311">
    <property type="interactions" value="106"/>
</dbReference>
<dbReference type="IntAct" id="P25311">
    <property type="interactions" value="95"/>
</dbReference>
<dbReference type="MINT" id="P25311"/>
<dbReference type="STRING" id="9606.ENSP00000292401"/>
<dbReference type="DrugBank" id="DB09130">
    <property type="generic name" value="Copper"/>
</dbReference>
<dbReference type="DrugBank" id="DB03721">
    <property type="generic name" value="N-acetyl-alpha-neuraminic acid"/>
</dbReference>
<dbReference type="CarbonylDB" id="P25311"/>
<dbReference type="GlyConnect" id="692">
    <property type="glycosylation" value="108 N-Linked glycans (3 sites), 1 O-GlcNAc glycan (1 site)"/>
</dbReference>
<dbReference type="GlyCosmos" id="P25311">
    <property type="glycosylation" value="4 sites, 122 glycans"/>
</dbReference>
<dbReference type="GlyGen" id="P25311">
    <property type="glycosylation" value="6 sites, 193 N-linked glycans (4 sites), 2 O-linked glycans (1 site)"/>
</dbReference>
<dbReference type="iPTMnet" id="P25311"/>
<dbReference type="PhosphoSitePlus" id="P25311"/>
<dbReference type="BioMuta" id="AZGP1"/>
<dbReference type="DMDM" id="292495049"/>
<dbReference type="REPRODUCTION-2DPAGE" id="IPI00166729"/>
<dbReference type="CPTAC" id="non-CPTAC-1167"/>
<dbReference type="CPTAC" id="non-CPTAC-2709"/>
<dbReference type="jPOST" id="P25311"/>
<dbReference type="MassIVE" id="P25311"/>
<dbReference type="PaxDb" id="9606-ENSP00000292401"/>
<dbReference type="PeptideAtlas" id="P25311"/>
<dbReference type="PRIDE" id="P25311"/>
<dbReference type="ProteomicsDB" id="54267"/>
<dbReference type="Antibodypedia" id="848">
    <property type="antibodies" value="367 antibodies from 33 providers"/>
</dbReference>
<dbReference type="DNASU" id="563"/>
<dbReference type="Ensembl" id="ENST00000292401.9">
    <property type="protein sequence ID" value="ENSP00000292401.4"/>
    <property type="gene ID" value="ENSG00000160862.13"/>
</dbReference>
<dbReference type="GeneID" id="563"/>
<dbReference type="KEGG" id="hsa:563"/>
<dbReference type="MANE-Select" id="ENST00000292401.9">
    <property type="protein sequence ID" value="ENSP00000292401.4"/>
    <property type="RefSeq nucleotide sequence ID" value="NM_001185.4"/>
    <property type="RefSeq protein sequence ID" value="NP_001176.1"/>
</dbReference>
<dbReference type="UCSC" id="uc003ush.4">
    <property type="organism name" value="human"/>
</dbReference>
<dbReference type="AGR" id="HGNC:910"/>
<dbReference type="CTD" id="563"/>
<dbReference type="DisGeNET" id="563"/>
<dbReference type="GeneCards" id="AZGP1"/>
<dbReference type="HGNC" id="HGNC:910">
    <property type="gene designation" value="AZGP1"/>
</dbReference>
<dbReference type="HPA" id="ENSG00000160862">
    <property type="expression patterns" value="Tissue enhanced (liver, salivary gland)"/>
</dbReference>
<dbReference type="MIM" id="194460">
    <property type="type" value="gene"/>
</dbReference>
<dbReference type="neXtProt" id="NX_P25311"/>
<dbReference type="OpenTargets" id="ENSG00000160862"/>
<dbReference type="PharmGKB" id="PA25203"/>
<dbReference type="VEuPathDB" id="HostDB:ENSG00000160862"/>
<dbReference type="eggNOG" id="ENOG502RWW3">
    <property type="taxonomic scope" value="Eukaryota"/>
</dbReference>
<dbReference type="GeneTree" id="ENSGT01130000278293"/>
<dbReference type="HOGENOM" id="CLU_047501_0_1_1"/>
<dbReference type="InParanoid" id="P25311"/>
<dbReference type="OMA" id="APYSCYV"/>
<dbReference type="OrthoDB" id="8936120at2759"/>
<dbReference type="PAN-GO" id="P25311">
    <property type="GO annotations" value="6 GO annotations based on evolutionary models"/>
</dbReference>
<dbReference type="PhylomeDB" id="P25311"/>
<dbReference type="TreeFam" id="TF336617"/>
<dbReference type="PathwayCommons" id="P25311"/>
<dbReference type="Reactome" id="R-HSA-5223345">
    <property type="pathway name" value="Miscellaneous transport and binding events"/>
</dbReference>
<dbReference type="SignaLink" id="P25311"/>
<dbReference type="BioGRID-ORCS" id="563">
    <property type="hits" value="35 hits in 1148 CRISPR screens"/>
</dbReference>
<dbReference type="CD-CODE" id="232F8A39">
    <property type="entry name" value="P-body"/>
</dbReference>
<dbReference type="ChiTaRS" id="AZGP1">
    <property type="organism name" value="human"/>
</dbReference>
<dbReference type="EvolutionaryTrace" id="P25311"/>
<dbReference type="GeneWiki" id="AZGP1"/>
<dbReference type="GenomeRNAi" id="563"/>
<dbReference type="Pharos" id="P25311">
    <property type="development level" value="Tbio"/>
</dbReference>
<dbReference type="PRO" id="PR:P25311"/>
<dbReference type="Proteomes" id="UP000005640">
    <property type="component" value="Chromosome 7"/>
</dbReference>
<dbReference type="RNAct" id="P25311">
    <property type="molecule type" value="protein"/>
</dbReference>
<dbReference type="Bgee" id="ENSG00000160862">
    <property type="expression patterns" value="Expressed in parotid gland and 180 other cell types or tissues"/>
</dbReference>
<dbReference type="ExpressionAtlas" id="P25311">
    <property type="expression patterns" value="baseline and differential"/>
</dbReference>
<dbReference type="GO" id="GO:0062023">
    <property type="term" value="C:collagen-containing extracellular matrix"/>
    <property type="evidence" value="ECO:0007005"/>
    <property type="project" value="BHF-UCL"/>
</dbReference>
<dbReference type="GO" id="GO:0009897">
    <property type="term" value="C:external side of plasma membrane"/>
    <property type="evidence" value="ECO:0000318"/>
    <property type="project" value="GO_Central"/>
</dbReference>
<dbReference type="GO" id="GO:0070062">
    <property type="term" value="C:extracellular exosome"/>
    <property type="evidence" value="ECO:0007005"/>
    <property type="project" value="UniProtKB"/>
</dbReference>
<dbReference type="GO" id="GO:0005576">
    <property type="term" value="C:extracellular region"/>
    <property type="evidence" value="ECO:0007005"/>
    <property type="project" value="BHF-UCL"/>
</dbReference>
<dbReference type="GO" id="GO:0005615">
    <property type="term" value="C:extracellular space"/>
    <property type="evidence" value="ECO:0000314"/>
    <property type="project" value="UniProtKB"/>
</dbReference>
<dbReference type="GO" id="GO:0005634">
    <property type="term" value="C:nucleus"/>
    <property type="evidence" value="ECO:0007005"/>
    <property type="project" value="UniProtKB"/>
</dbReference>
<dbReference type="GO" id="GO:0008320">
    <property type="term" value="F:protein transmembrane transporter activity"/>
    <property type="evidence" value="ECO:0000303"/>
    <property type="project" value="UniProtKB"/>
</dbReference>
<dbReference type="GO" id="GO:0004540">
    <property type="term" value="F:RNA nuclease activity"/>
    <property type="evidence" value="ECO:0000303"/>
    <property type="project" value="UniProtKB"/>
</dbReference>
<dbReference type="GO" id="GO:0002486">
    <property type="term" value="P:antigen processing and presentation of endogenous peptide antigen via MHC class I via ER pathway, TAP-independent"/>
    <property type="evidence" value="ECO:0000318"/>
    <property type="project" value="GO_Central"/>
</dbReference>
<dbReference type="GO" id="GO:0002476">
    <property type="term" value="P:antigen processing and presentation of endogenous peptide antigen via MHC class Ib"/>
    <property type="evidence" value="ECO:0000318"/>
    <property type="project" value="GO_Central"/>
</dbReference>
<dbReference type="GO" id="GO:0007155">
    <property type="term" value="P:cell adhesion"/>
    <property type="evidence" value="ECO:0000314"/>
    <property type="project" value="UniProtKB"/>
</dbReference>
<dbReference type="GO" id="GO:0001580">
    <property type="term" value="P:detection of chemical stimulus involved in sensory perception of bitter taste"/>
    <property type="evidence" value="ECO:0000314"/>
    <property type="project" value="UniProtKB"/>
</dbReference>
<dbReference type="GO" id="GO:0006955">
    <property type="term" value="P:immune response"/>
    <property type="evidence" value="ECO:0000318"/>
    <property type="project" value="GO_Central"/>
</dbReference>
<dbReference type="GO" id="GO:0008285">
    <property type="term" value="P:negative regulation of cell population proliferation"/>
    <property type="evidence" value="ECO:0000303"/>
    <property type="project" value="UniProtKB"/>
</dbReference>
<dbReference type="GO" id="GO:0001916">
    <property type="term" value="P:positive regulation of T cell mediated cytotoxicity"/>
    <property type="evidence" value="ECO:0000318"/>
    <property type="project" value="GO_Central"/>
</dbReference>
<dbReference type="CDD" id="cd21010">
    <property type="entry name" value="IgC1_MHC-like_ZAG"/>
    <property type="match status" value="1"/>
</dbReference>
<dbReference type="FunFam" id="3.30.500.10:FF:000001">
    <property type="entry name" value="H-2 class I histocompatibility antigen, alpha chain"/>
    <property type="match status" value="1"/>
</dbReference>
<dbReference type="FunFam" id="2.60.40.10:FF:001703">
    <property type="entry name" value="Zinc-alpha-2-glycoprotein"/>
    <property type="match status" value="1"/>
</dbReference>
<dbReference type="Gene3D" id="2.60.40.10">
    <property type="entry name" value="Immunoglobulins"/>
    <property type="match status" value="1"/>
</dbReference>
<dbReference type="Gene3D" id="3.30.500.10">
    <property type="entry name" value="MHC class I-like antigen recognition-like"/>
    <property type="match status" value="1"/>
</dbReference>
<dbReference type="InterPro" id="IPR007110">
    <property type="entry name" value="Ig-like_dom"/>
</dbReference>
<dbReference type="InterPro" id="IPR036179">
    <property type="entry name" value="Ig-like_dom_sf"/>
</dbReference>
<dbReference type="InterPro" id="IPR013783">
    <property type="entry name" value="Ig-like_fold"/>
</dbReference>
<dbReference type="InterPro" id="IPR003006">
    <property type="entry name" value="Ig/MHC_CS"/>
</dbReference>
<dbReference type="InterPro" id="IPR003597">
    <property type="entry name" value="Ig_C1-set"/>
</dbReference>
<dbReference type="InterPro" id="IPR050208">
    <property type="entry name" value="MHC_class-I_related"/>
</dbReference>
<dbReference type="InterPro" id="IPR011161">
    <property type="entry name" value="MHC_I-like_Ag-recog"/>
</dbReference>
<dbReference type="InterPro" id="IPR037055">
    <property type="entry name" value="MHC_I-like_Ag-recog_sf"/>
</dbReference>
<dbReference type="InterPro" id="IPR011162">
    <property type="entry name" value="MHC_I/II-like_Ag-recog"/>
</dbReference>
<dbReference type="InterPro" id="IPR001039">
    <property type="entry name" value="MHC_I_a_a1/a2"/>
</dbReference>
<dbReference type="PANTHER" id="PTHR16675">
    <property type="entry name" value="MHC CLASS I-RELATED"/>
    <property type="match status" value="1"/>
</dbReference>
<dbReference type="PANTHER" id="PTHR16675:SF289">
    <property type="entry name" value="ZINC-ALPHA-2-GLYCOPROTEIN"/>
    <property type="match status" value="1"/>
</dbReference>
<dbReference type="Pfam" id="PF07654">
    <property type="entry name" value="C1-set"/>
    <property type="match status" value="1"/>
</dbReference>
<dbReference type="Pfam" id="PF00129">
    <property type="entry name" value="MHC_I"/>
    <property type="match status" value="1"/>
</dbReference>
<dbReference type="PRINTS" id="PR01638">
    <property type="entry name" value="MHCCLASSI"/>
</dbReference>
<dbReference type="SMART" id="SM00407">
    <property type="entry name" value="IGc1"/>
    <property type="match status" value="1"/>
</dbReference>
<dbReference type="SUPFAM" id="SSF48726">
    <property type="entry name" value="Immunoglobulin"/>
    <property type="match status" value="1"/>
</dbReference>
<dbReference type="SUPFAM" id="SSF54452">
    <property type="entry name" value="MHC antigen-recognition domain"/>
    <property type="match status" value="1"/>
</dbReference>
<dbReference type="PROSITE" id="PS50835">
    <property type="entry name" value="IG_LIKE"/>
    <property type="match status" value="1"/>
</dbReference>
<dbReference type="PROSITE" id="PS00290">
    <property type="entry name" value="IG_MHC"/>
    <property type="match status" value="1"/>
</dbReference>
<gene>
    <name type="primary">AZGP1</name>
    <name type="synonym">ZAG</name>
    <name type="synonym">ZNGP1</name>
</gene>
<proteinExistence type="evidence at protein level"/>
<feature type="signal peptide" evidence="4 13">
    <location>
        <begin position="1"/>
        <end position="20"/>
    </location>
</feature>
<feature type="chain" id="PRO_0000019012" description="Zinc-alpha-2-glycoprotein">
    <location>
        <begin position="21"/>
        <end position="298"/>
    </location>
</feature>
<feature type="domain" description="Ig-like C1-type">
    <location>
        <begin position="207"/>
        <end position="292"/>
    </location>
</feature>
<feature type="modified residue" description="Pyrrolidone carboxylic acid" evidence="13">
    <location>
        <position position="21"/>
    </location>
</feature>
<feature type="glycosylation site" description="N-linked (GlcNAc...) (complex) asparagine" evidence="1 7 8 10 11">
    <location>
        <position position="109"/>
    </location>
</feature>
<feature type="glycosylation site" description="N-linked (GlcNAc...) asparagine" evidence="2 6 7 8 11">
    <location>
        <position position="112"/>
    </location>
</feature>
<feature type="glycosylation site" description="N-linked (GlcNAc...) (complex) asparagine" evidence="1 2 3 5 7 8 10 11 12">
    <location>
        <position position="128"/>
    </location>
</feature>
<feature type="glycosylation site" description="N-linked (GlcNAc...) asparagine" evidence="1 5 9">
    <location>
        <position position="259"/>
    </location>
</feature>
<feature type="disulfide bond">
    <location>
        <begin position="123"/>
        <end position="186"/>
    </location>
</feature>
<feature type="disulfide bond">
    <location>
        <begin position="225"/>
        <end position="280"/>
    </location>
</feature>
<feature type="sequence conflict" description="In Ref. 1; CAA42438." evidence="14" ref="1">
    <original>V</original>
    <variation>S</variation>
    <location>
        <position position="2"/>
    </location>
</feature>
<feature type="sequence conflict" description="In Ref. 1; CAA42438." evidence="14" ref="1">
    <original>V</original>
    <variation>L</variation>
    <location>
        <position position="5"/>
    </location>
</feature>
<feature type="sequence conflict" description="In Ref. 7; AAH05306." evidence="14" ref="7">
    <original>I</original>
    <variation>V</variation>
    <location>
        <position position="33"/>
    </location>
</feature>
<feature type="sequence conflict" description="In Ref. 9; AA sequence." evidence="14" ref="9">
    <original>Q</original>
    <variation>E</variation>
    <location>
        <position position="85"/>
    </location>
</feature>
<feature type="sequence conflict" description="In Ref. 9; AA sequence." evidence="14" ref="9">
    <location>
        <begin position="96"/>
        <end position="97"/>
    </location>
</feature>
<feature type="sequence conflict" description="In Ref. 9; AA sequence." evidence="14" ref="9">
    <original>E</original>
    <variation>Q</variation>
    <location>
        <position position="244"/>
    </location>
</feature>
<feature type="strand" evidence="15">
    <location>
        <begin position="27"/>
        <end position="39"/>
    </location>
</feature>
<feature type="strand" evidence="17">
    <location>
        <begin position="42"/>
        <end position="44"/>
    </location>
</feature>
<feature type="strand" evidence="15">
    <location>
        <begin position="46"/>
        <end position="53"/>
    </location>
</feature>
<feature type="strand" evidence="15">
    <location>
        <begin position="56"/>
        <end position="62"/>
    </location>
</feature>
<feature type="turn" evidence="15">
    <location>
        <begin position="63"/>
        <end position="65"/>
    </location>
</feature>
<feature type="helix" evidence="15">
    <location>
        <begin position="72"/>
        <end position="76"/>
    </location>
</feature>
<feature type="strand" evidence="18">
    <location>
        <begin position="79"/>
        <end position="81"/>
    </location>
</feature>
<feature type="helix" evidence="15">
    <location>
        <begin position="83"/>
        <end position="107"/>
    </location>
</feature>
<feature type="strand" evidence="15">
    <location>
        <begin position="116"/>
        <end position="126"/>
    </location>
</feature>
<feature type="strand" evidence="15">
    <location>
        <begin position="129"/>
        <end position="139"/>
    </location>
</feature>
<feature type="strand" evidence="15">
    <location>
        <begin position="142"/>
        <end position="148"/>
    </location>
</feature>
<feature type="turn" evidence="15">
    <location>
        <begin position="149"/>
        <end position="152"/>
    </location>
</feature>
<feature type="strand" evidence="15">
    <location>
        <begin position="153"/>
        <end position="156"/>
    </location>
</feature>
<feature type="helix" evidence="15">
    <location>
        <begin position="159"/>
        <end position="168"/>
    </location>
</feature>
<feature type="helix" evidence="15">
    <location>
        <begin position="173"/>
        <end position="183"/>
    </location>
</feature>
<feature type="helix" evidence="15">
    <location>
        <begin position="185"/>
        <end position="196"/>
    </location>
</feature>
<feature type="helix" evidence="15">
    <location>
        <begin position="198"/>
        <end position="201"/>
    </location>
</feature>
<feature type="strand" evidence="15">
    <location>
        <begin position="208"/>
        <end position="215"/>
    </location>
</feature>
<feature type="strand" evidence="16">
    <location>
        <begin position="217"/>
        <end position="219"/>
    </location>
</feature>
<feature type="strand" evidence="15">
    <location>
        <begin position="221"/>
        <end position="233"/>
    </location>
</feature>
<feature type="strand" evidence="15">
    <location>
        <begin position="235"/>
        <end position="241"/>
    </location>
</feature>
<feature type="strand" evidence="17">
    <location>
        <begin position="244"/>
        <end position="246"/>
    </location>
</feature>
<feature type="strand" evidence="15">
    <location>
        <begin position="249"/>
        <end position="256"/>
    </location>
</feature>
<feature type="turn" evidence="15">
    <location>
        <begin position="257"/>
        <end position="260"/>
    </location>
</feature>
<feature type="strand" evidence="15">
    <location>
        <begin position="261"/>
        <end position="270"/>
    </location>
</feature>
<feature type="strand" evidence="15">
    <location>
        <begin position="278"/>
        <end position="284"/>
    </location>
</feature>
<feature type="strand" evidence="19">
    <location>
        <begin position="287"/>
        <end position="289"/>
    </location>
</feature>
<feature type="strand" evidence="15">
    <location>
        <begin position="291"/>
        <end position="294"/>
    </location>
</feature>
<accession>P25311</accession>
<accession>D6W5T8</accession>
<accession>O60386</accession>
<accession>Q5XKQ4</accession>
<accession>Q8N4N0</accession>
<evidence type="ECO:0000269" key="1">
    <source>
    </source>
</evidence>
<evidence type="ECO:0000269" key="2">
    <source>
    </source>
</evidence>
<evidence type="ECO:0000269" key="3">
    <source>
    </source>
</evidence>
<evidence type="ECO:0000269" key="4">
    <source>
    </source>
</evidence>
<evidence type="ECO:0000269" key="5">
    <source>
    </source>
</evidence>
<evidence type="ECO:0000269" key="6">
    <source>
    </source>
</evidence>
<evidence type="ECO:0000269" key="7">
    <source>
    </source>
</evidence>
<evidence type="ECO:0000269" key="8">
    <source>
    </source>
</evidence>
<evidence type="ECO:0000269" key="9">
    <source>
    </source>
</evidence>
<evidence type="ECO:0000269" key="10">
    <source>
    </source>
</evidence>
<evidence type="ECO:0000269" key="11">
    <source>
    </source>
</evidence>
<evidence type="ECO:0000269" key="12">
    <source>
    </source>
</evidence>
<evidence type="ECO:0000269" key="13">
    <source>
    </source>
</evidence>
<evidence type="ECO:0000305" key="14"/>
<evidence type="ECO:0007829" key="15">
    <source>
        <dbReference type="PDB" id="1T7V"/>
    </source>
</evidence>
<evidence type="ECO:0007829" key="16">
    <source>
        <dbReference type="PDB" id="1T7X"/>
    </source>
</evidence>
<evidence type="ECO:0007829" key="17">
    <source>
        <dbReference type="PDB" id="1ZAG"/>
    </source>
</evidence>
<evidence type="ECO:0007829" key="18">
    <source>
        <dbReference type="PDB" id="3ES6"/>
    </source>
</evidence>
<evidence type="ECO:0007829" key="19">
    <source>
        <dbReference type="PDB" id="6R2U"/>
    </source>
</evidence>